<protein>
    <recommendedName>
        <fullName>Guanine nucleotide-binding protein-like 1</fullName>
    </recommendedName>
    <alternativeName>
        <fullName>GTP-binding protein MMR1</fullName>
    </alternativeName>
</protein>
<comment type="function">
    <text evidence="1">Possible regulatory or functional link with the histocompatibility cluster.</text>
</comment>
<comment type="alternative products">
    <event type="alternative splicing"/>
    <isoform>
        <id>P36916-1</id>
        <name>1</name>
        <sequence type="displayed"/>
    </isoform>
    <isoform>
        <id>P36916-2</id>
        <name>2</name>
        <sequence type="described" ref="VSP_026994 VSP_026995"/>
    </isoform>
</comment>
<comment type="domain">
    <text>In contrast to other GTP-binding proteins, this family is characterized by a circular permutation of the GTPase motifs described by a G4-G1-G3 pattern.</text>
</comment>
<comment type="similarity">
    <text evidence="4">Belongs to the TRAFAC class YlqF/YawG GTPase family.</text>
</comment>
<feature type="chain" id="PRO_0000122442" description="Guanine nucleotide-binding protein-like 1">
    <location>
        <begin position="1"/>
        <end position="607"/>
    </location>
</feature>
<feature type="domain" description="CP-type G" evidence="4">
    <location>
        <begin position="178"/>
        <end position="418"/>
    </location>
</feature>
<feature type="region of interest" description="Disordered" evidence="5">
    <location>
        <begin position="1"/>
        <end position="81"/>
    </location>
</feature>
<feature type="region of interest" description="Disordered" evidence="5">
    <location>
        <begin position="544"/>
        <end position="607"/>
    </location>
</feature>
<feature type="compositionally biased region" description="Basic residues" evidence="5">
    <location>
        <begin position="1"/>
        <end position="14"/>
    </location>
</feature>
<feature type="compositionally biased region" description="Basic and acidic residues" evidence="5">
    <location>
        <begin position="15"/>
        <end position="26"/>
    </location>
</feature>
<feature type="compositionally biased region" description="Acidic residues" evidence="5">
    <location>
        <begin position="550"/>
        <end position="585"/>
    </location>
</feature>
<feature type="binding site" evidence="3">
    <location>
        <begin position="225"/>
        <end position="228"/>
    </location>
    <ligand>
        <name>GTP</name>
        <dbReference type="ChEBI" id="CHEBI:37565"/>
    </ligand>
</feature>
<feature type="binding site" evidence="3">
    <location>
        <begin position="367"/>
        <end position="374"/>
    </location>
    <ligand>
        <name>GTP</name>
        <dbReference type="ChEBI" id="CHEBI:37565"/>
    </ligand>
</feature>
<feature type="binding site" evidence="3">
    <location>
        <begin position="411"/>
        <end position="415"/>
    </location>
    <ligand>
        <name>GTP</name>
        <dbReference type="ChEBI" id="CHEBI:37565"/>
    </ligand>
</feature>
<feature type="modified residue" description="Phosphoserine" evidence="2">
    <location>
        <position position="32"/>
    </location>
</feature>
<feature type="modified residue" description="Phosphoserine" evidence="2">
    <location>
        <position position="33"/>
    </location>
</feature>
<feature type="modified residue" description="Phosphoserine" evidence="8">
    <location>
        <position position="34"/>
    </location>
</feature>
<feature type="modified residue" description="Phosphothreonine" evidence="2">
    <location>
        <position position="48"/>
    </location>
</feature>
<feature type="modified residue" description="Phosphothreonine" evidence="2">
    <location>
        <position position="50"/>
    </location>
</feature>
<feature type="modified residue" description="Phosphoserine" evidence="2">
    <location>
        <position position="51"/>
    </location>
</feature>
<feature type="modified residue" description="Phosphoserine" evidence="2">
    <location>
        <position position="68"/>
    </location>
</feature>
<feature type="modified residue" description="Phosphoserine" evidence="8">
    <location>
        <position position="324"/>
    </location>
</feature>
<feature type="modified residue" description="Phosphoserine" evidence="2">
    <location>
        <position position="561"/>
    </location>
</feature>
<feature type="modified residue" description="Phosphoserine" evidence="2">
    <location>
        <position position="562"/>
    </location>
</feature>
<feature type="modified residue" description="Phosphoserine" evidence="2">
    <location>
        <position position="563"/>
    </location>
</feature>
<feature type="splice variant" id="VSP_026994" description="In isoform 2." evidence="6">
    <location>
        <begin position="1"/>
        <end position="177"/>
    </location>
</feature>
<feature type="splice variant" id="VSP_026995" description="In isoform 2." evidence="6">
    <original>WRQLWR</original>
    <variation>MEAAVA</variation>
    <location>
        <begin position="178"/>
        <end position="183"/>
    </location>
</feature>
<feature type="sequence conflict" description="In Ref. 1; CAA46160 and 3; AAH10298." evidence="7" ref="1 3">
    <original>C</original>
    <variation>R</variation>
    <location>
        <position position="245"/>
    </location>
</feature>
<feature type="sequence conflict" description="In Ref. 1; CAA46160." evidence="7" ref="1">
    <original>K</original>
    <variation>Q</variation>
    <location>
        <position position="310"/>
    </location>
</feature>
<feature type="sequence conflict" description="In Ref. 1; CAA46160." evidence="7" ref="1">
    <original>A</original>
    <variation>R</variation>
    <location>
        <position position="491"/>
    </location>
</feature>
<reference key="1">
    <citation type="journal article" date="1992" name="Genomics">
        <title>YAC-assisted cloning of a putative G-protein mapping to the MHC class I region.</title>
        <authorList>
            <person name="Denizot F."/>
            <person name="Mattei M.-G."/>
            <person name="Vernet C."/>
            <person name="Pontarotti P."/>
            <person name="Chimini G."/>
        </authorList>
    </citation>
    <scope>NUCLEOTIDE SEQUENCE [MRNA] (ISOFORM 2)</scope>
</reference>
<reference key="2">
    <citation type="journal article" date="2009" name="PLoS Biol.">
        <title>Lineage-specific biology revealed by a finished genome assembly of the mouse.</title>
        <authorList>
            <person name="Church D.M."/>
            <person name="Goodstadt L."/>
            <person name="Hillier L.W."/>
            <person name="Zody M.C."/>
            <person name="Goldstein S."/>
            <person name="She X."/>
            <person name="Bult C.J."/>
            <person name="Agarwala R."/>
            <person name="Cherry J.L."/>
            <person name="DiCuccio M."/>
            <person name="Hlavina W."/>
            <person name="Kapustin Y."/>
            <person name="Meric P."/>
            <person name="Maglott D."/>
            <person name="Birtle Z."/>
            <person name="Marques A.C."/>
            <person name="Graves T."/>
            <person name="Zhou S."/>
            <person name="Teague B."/>
            <person name="Potamousis K."/>
            <person name="Churas C."/>
            <person name="Place M."/>
            <person name="Herschleb J."/>
            <person name="Runnheim R."/>
            <person name="Forrest D."/>
            <person name="Amos-Landgraf J."/>
            <person name="Schwartz D.C."/>
            <person name="Cheng Z."/>
            <person name="Lindblad-Toh K."/>
            <person name="Eichler E.E."/>
            <person name="Ponting C.P."/>
        </authorList>
    </citation>
    <scope>NUCLEOTIDE SEQUENCE [LARGE SCALE GENOMIC DNA]</scope>
    <source>
        <strain>C57BL/6J</strain>
    </source>
</reference>
<reference key="3">
    <citation type="journal article" date="2004" name="Genome Res.">
        <title>The status, quality, and expansion of the NIH full-length cDNA project: the Mammalian Gene Collection (MGC).</title>
        <authorList>
            <consortium name="The MGC Project Team"/>
        </authorList>
    </citation>
    <scope>NUCLEOTIDE SEQUENCE [LARGE SCALE MRNA] (ISOFORM 1)</scope>
    <source>
        <strain>129</strain>
        <tissue>Mammary tumor</tissue>
    </source>
</reference>
<reference key="4">
    <citation type="journal article" date="2010" name="Cell">
        <title>A tissue-specific atlas of mouse protein phosphorylation and expression.</title>
        <authorList>
            <person name="Huttlin E.L."/>
            <person name="Jedrychowski M.P."/>
            <person name="Elias J.E."/>
            <person name="Goswami T."/>
            <person name="Rad R."/>
            <person name="Beausoleil S.A."/>
            <person name="Villen J."/>
            <person name="Haas W."/>
            <person name="Sowa M.E."/>
            <person name="Gygi S.P."/>
        </authorList>
    </citation>
    <scope>PHOSPHORYLATION [LARGE SCALE ANALYSIS] AT SER-34 AND SER-324</scope>
    <scope>IDENTIFICATION BY MASS SPECTROMETRY [LARGE SCALE ANALYSIS]</scope>
    <source>
        <tissue>Brain</tissue>
        <tissue>Heart</tissue>
        <tissue>Kidney</tissue>
        <tissue>Liver</tissue>
        <tissue>Lung</tissue>
        <tissue>Pancreas</tissue>
        <tissue>Spleen</tissue>
        <tissue>Testis</tissue>
    </source>
</reference>
<proteinExistence type="evidence at protein level"/>
<keyword id="KW-0025">Alternative splicing</keyword>
<keyword id="KW-0342">GTP-binding</keyword>
<keyword id="KW-0547">Nucleotide-binding</keyword>
<keyword id="KW-0597">Phosphoprotein</keyword>
<keyword id="KW-1185">Reference proteome</keyword>
<accession>P36916</accession>
<accession>E9QPZ9</accession>
<accession>Q91Z20</accession>
<evidence type="ECO:0000250" key="1"/>
<evidence type="ECO:0000250" key="2">
    <source>
        <dbReference type="UniProtKB" id="P36915"/>
    </source>
</evidence>
<evidence type="ECO:0000255" key="3"/>
<evidence type="ECO:0000255" key="4">
    <source>
        <dbReference type="PROSITE-ProRule" id="PRU01058"/>
    </source>
</evidence>
<evidence type="ECO:0000256" key="5">
    <source>
        <dbReference type="SAM" id="MobiDB-lite"/>
    </source>
</evidence>
<evidence type="ECO:0000303" key="6">
    <source>
    </source>
</evidence>
<evidence type="ECO:0000305" key="7"/>
<evidence type="ECO:0007744" key="8">
    <source>
    </source>
</evidence>
<dbReference type="EMBL" id="X65026">
    <property type="protein sequence ID" value="CAA46160.1"/>
    <property type="molecule type" value="mRNA"/>
</dbReference>
<dbReference type="EMBL" id="AC112970">
    <property type="status" value="NOT_ANNOTATED_CDS"/>
    <property type="molecule type" value="Genomic_DNA"/>
</dbReference>
<dbReference type="EMBL" id="BC010298">
    <property type="protein sequence ID" value="AAH10298.1"/>
    <property type="molecule type" value="mRNA"/>
</dbReference>
<dbReference type="CCDS" id="CCDS37606.1">
    <molecule id="P36916-1"/>
</dbReference>
<dbReference type="RefSeq" id="NP_032162.2">
    <molecule id="P36916-1"/>
    <property type="nucleotide sequence ID" value="NM_008136.2"/>
</dbReference>
<dbReference type="BioGRID" id="199960">
    <property type="interactions" value="5"/>
</dbReference>
<dbReference type="FunCoup" id="P36916">
    <property type="interactions" value="2466"/>
</dbReference>
<dbReference type="IntAct" id="P36916">
    <property type="interactions" value="2"/>
</dbReference>
<dbReference type="MINT" id="P36916"/>
<dbReference type="STRING" id="10090.ENSMUSP00000084450"/>
<dbReference type="GlyGen" id="P36916">
    <property type="glycosylation" value="1 site, 1 O-linked glycan (1 site)"/>
</dbReference>
<dbReference type="iPTMnet" id="P36916"/>
<dbReference type="PhosphoSitePlus" id="P36916"/>
<dbReference type="SwissPalm" id="P36916"/>
<dbReference type="jPOST" id="P36916"/>
<dbReference type="PaxDb" id="10090-ENSMUSP00000084450"/>
<dbReference type="PeptideAtlas" id="P36916"/>
<dbReference type="ProteomicsDB" id="267642">
    <molecule id="P36916-1"/>
</dbReference>
<dbReference type="ProteomicsDB" id="267643">
    <molecule id="P36916-2"/>
</dbReference>
<dbReference type="Pumba" id="P36916"/>
<dbReference type="Antibodypedia" id="26307">
    <property type="antibodies" value="247 antibodies from 30 providers"/>
</dbReference>
<dbReference type="DNASU" id="14670"/>
<dbReference type="Ensembl" id="ENSMUST00000087200.4">
    <molecule id="P36916-1"/>
    <property type="protein sequence ID" value="ENSMUSP00000084450.4"/>
    <property type="gene ID" value="ENSMUSG00000024429.10"/>
</dbReference>
<dbReference type="GeneID" id="14670"/>
<dbReference type="KEGG" id="mmu:14670"/>
<dbReference type="UCSC" id="uc008cjo.1">
    <molecule id="P36916-1"/>
    <property type="organism name" value="mouse"/>
</dbReference>
<dbReference type="AGR" id="MGI:95764"/>
<dbReference type="CTD" id="2794"/>
<dbReference type="MGI" id="MGI:95764">
    <property type="gene designation" value="Gnl1"/>
</dbReference>
<dbReference type="VEuPathDB" id="HostDB:ENSMUSG00000024429"/>
<dbReference type="eggNOG" id="KOG1424">
    <property type="taxonomic scope" value="Eukaryota"/>
</dbReference>
<dbReference type="GeneTree" id="ENSGT00940000158047"/>
<dbReference type="HOGENOM" id="CLU_013649_1_1_1"/>
<dbReference type="InParanoid" id="P36916"/>
<dbReference type="OMA" id="CDFPVRP"/>
<dbReference type="OrthoDB" id="391988at2759"/>
<dbReference type="PhylomeDB" id="P36916"/>
<dbReference type="TreeFam" id="TF324569"/>
<dbReference type="BioGRID-ORCS" id="14670">
    <property type="hits" value="14 hits in 81 CRISPR screens"/>
</dbReference>
<dbReference type="ChiTaRS" id="Gnl1">
    <property type="organism name" value="mouse"/>
</dbReference>
<dbReference type="PRO" id="PR:P36916"/>
<dbReference type="Proteomes" id="UP000000589">
    <property type="component" value="Chromosome 17"/>
</dbReference>
<dbReference type="RNAct" id="P36916">
    <property type="molecule type" value="protein"/>
</dbReference>
<dbReference type="Bgee" id="ENSMUSG00000024429">
    <property type="expression patterns" value="Expressed in superior frontal gyrus and 236 other cell types or tissues"/>
</dbReference>
<dbReference type="GO" id="GO:0005525">
    <property type="term" value="F:GTP binding"/>
    <property type="evidence" value="ECO:0007669"/>
    <property type="project" value="UniProtKB-KW"/>
</dbReference>
<dbReference type="GO" id="GO:0003924">
    <property type="term" value="F:GTPase activity"/>
    <property type="evidence" value="ECO:0007669"/>
    <property type="project" value="InterPro"/>
</dbReference>
<dbReference type="GO" id="GO:0006974">
    <property type="term" value="P:DNA damage response"/>
    <property type="evidence" value="ECO:0007669"/>
    <property type="project" value="Ensembl"/>
</dbReference>
<dbReference type="CDD" id="cd01857">
    <property type="entry name" value="HSR1_MMR1"/>
    <property type="match status" value="1"/>
</dbReference>
<dbReference type="Gene3D" id="3.40.50.300">
    <property type="entry name" value="P-loop containing nucleotide triphosphate hydrolases"/>
    <property type="match status" value="1"/>
</dbReference>
<dbReference type="InterPro" id="IPR030378">
    <property type="entry name" value="G_CP_dom"/>
</dbReference>
<dbReference type="InterPro" id="IPR043358">
    <property type="entry name" value="GNL1-like"/>
</dbReference>
<dbReference type="InterPro" id="IPR006073">
    <property type="entry name" value="GTP-bd"/>
</dbReference>
<dbReference type="InterPro" id="IPR027417">
    <property type="entry name" value="P-loop_NTPase"/>
</dbReference>
<dbReference type="PANTHER" id="PTHR45709:SF3">
    <property type="entry name" value="GUANINE NUCLEOTIDE-BINDING PROTEIN-LIKE 1"/>
    <property type="match status" value="1"/>
</dbReference>
<dbReference type="PANTHER" id="PTHR45709">
    <property type="entry name" value="LARGE SUBUNIT GTPASE 1 HOMOLOG-RELATED"/>
    <property type="match status" value="1"/>
</dbReference>
<dbReference type="Pfam" id="PF01926">
    <property type="entry name" value="MMR_HSR1"/>
    <property type="match status" value="1"/>
</dbReference>
<dbReference type="SUPFAM" id="SSF52540">
    <property type="entry name" value="P-loop containing nucleoside triphosphate hydrolases"/>
    <property type="match status" value="1"/>
</dbReference>
<dbReference type="PROSITE" id="PS51721">
    <property type="entry name" value="G_CP"/>
    <property type="match status" value="1"/>
</dbReference>
<organism>
    <name type="scientific">Mus musculus</name>
    <name type="common">Mouse</name>
    <dbReference type="NCBI Taxonomy" id="10090"/>
    <lineage>
        <taxon>Eukaryota</taxon>
        <taxon>Metazoa</taxon>
        <taxon>Chordata</taxon>
        <taxon>Craniata</taxon>
        <taxon>Vertebrata</taxon>
        <taxon>Euteleostomi</taxon>
        <taxon>Mammalia</taxon>
        <taxon>Eutheria</taxon>
        <taxon>Euarchontoglires</taxon>
        <taxon>Glires</taxon>
        <taxon>Rodentia</taxon>
        <taxon>Myomorpha</taxon>
        <taxon>Muroidea</taxon>
        <taxon>Muridae</taxon>
        <taxon>Murinae</taxon>
        <taxon>Mus</taxon>
        <taxon>Mus</taxon>
    </lineage>
</organism>
<name>GNL1_MOUSE</name>
<sequence>MPRKKPFSVKQKKKQLQDKRERKRGLQDGLRSSSNSRSGSRERREEQTDTSDGESVTHHIRRLNQQPSQGLGPRGYDPNRYRLHFERDSREEVERRKRAAREQVLQPVSAEVLELDIREVYQPGSVLDFPRRPPWSYEMSKEQLMSQEERSFQEYLGKIHGAYTSEKLSYFEHNLETWRQLWRVLEMSDIVLLITDIRHPVVNFPPALYEYVTGELGLALVLVLNKVDLAPPALVVAWKHYFHQCYPQLHIVLFTSFPRDTRTPQEPGGVLKKNRRRGKGWTRALGPEQLLRACEAITVGKVDLSSWREKIARDVAGASWGNVSGEEEEEEDGPAVLVEQLTDSAMEPTGPSRERYKDGVVTIGCIGFPNVGKSSLINGLVGRKVVSVSRTPGHTRYFQTYFLTPSVKLCDCPGLIFPSLLPRQLQVLAGIYPIAQIQEPYTSVGYLASRIPVQALLHLRHPEAEDPSAEHPWCAWDICEAWAEKRGYKTAKAARNDVYRAANSLLRLAVDGRLSLCFYPPGYSEQRGTWESHPETAELVLSQGRVGPAGDEEEEEEEELSSSCEEEGEEDRDADEEGEGDEDTPTSDPGSCLTARNPYALLGEDEC</sequence>
<gene>
    <name type="primary">Gnl1</name>
    <name type="synonym">Gna-rs1</name>
    <name type="synonym">Mmr1</name>
</gene>